<comment type="subcellular location">
    <subcellularLocation>
        <location evidence="2">Membrane</location>
        <topology evidence="2">Single-pass membrane protein</topology>
    </subcellularLocation>
</comment>
<comment type="miscellaneous">
    <text evidence="2">Partially overlaps YDR134C.</text>
</comment>
<comment type="caution">
    <text evidence="3">Product of a dubious gene prediction unlikely to encode a functional protein. Because of that it is not part of the S.cerevisiae S288c complete/reference proteome set.</text>
</comment>
<keyword id="KW-0472">Membrane</keyword>
<keyword id="KW-0812">Transmembrane</keyword>
<keyword id="KW-1133">Transmembrane helix</keyword>
<dbReference type="EMBL" id="Z48179">
    <property type="protein sequence ID" value="CAA88214.1"/>
    <property type="molecule type" value="Genomic_DNA"/>
</dbReference>
<dbReference type="EMBL" id="AY557663">
    <property type="protein sequence ID" value="AAS55989.1"/>
    <property type="molecule type" value="Genomic_DNA"/>
</dbReference>
<dbReference type="PIR" id="S51860">
    <property type="entry name" value="S51860"/>
</dbReference>
<dbReference type="SMR" id="Q03904"/>
<dbReference type="DIP" id="DIP-3876N"/>
<dbReference type="IntAct" id="Q03904">
    <property type="interactions" value="1"/>
</dbReference>
<dbReference type="STRING" id="4932.YDR133C"/>
<dbReference type="PaxDb" id="4932-YDR133C"/>
<dbReference type="EnsemblFungi" id="YDR133C_mRNA">
    <property type="protein sequence ID" value="YDR133C"/>
    <property type="gene ID" value="YDR133C"/>
</dbReference>
<dbReference type="AGR" id="SGD:S000002540"/>
<dbReference type="SGD" id="S000002540">
    <property type="gene designation" value="YDR133C"/>
</dbReference>
<dbReference type="HOGENOM" id="CLU_2265804_0_0_1"/>
<dbReference type="ChiTaRS" id="YDR133C">
    <property type="organism name" value="yeast"/>
</dbReference>
<dbReference type="GO" id="GO:0016020">
    <property type="term" value="C:membrane"/>
    <property type="evidence" value="ECO:0007669"/>
    <property type="project" value="UniProtKB-SubCell"/>
</dbReference>
<protein>
    <recommendedName>
        <fullName>Putative uncharacterized protein YDR133C</fullName>
    </recommendedName>
</protein>
<proteinExistence type="uncertain"/>
<evidence type="ECO:0000255" key="1"/>
<evidence type="ECO:0000305" key="2"/>
<evidence type="ECO:0000305" key="3">
    <source>
    </source>
</evidence>
<reference key="1">
    <citation type="journal article" date="1997" name="Nature">
        <title>The nucleotide sequence of Saccharomyces cerevisiae chromosome IV.</title>
        <authorList>
            <person name="Jacq C."/>
            <person name="Alt-Moerbe J."/>
            <person name="Andre B."/>
            <person name="Arnold W."/>
            <person name="Bahr A."/>
            <person name="Ballesta J.P.G."/>
            <person name="Bargues M."/>
            <person name="Baron L."/>
            <person name="Becker A."/>
            <person name="Biteau N."/>
            <person name="Bloecker H."/>
            <person name="Blugeon C."/>
            <person name="Boskovic J."/>
            <person name="Brandt P."/>
            <person name="Brueckner M."/>
            <person name="Buitrago M.J."/>
            <person name="Coster F."/>
            <person name="Delaveau T."/>
            <person name="del Rey F."/>
            <person name="Dujon B."/>
            <person name="Eide L.G."/>
            <person name="Garcia-Cantalejo J.M."/>
            <person name="Goffeau A."/>
            <person name="Gomez-Peris A."/>
            <person name="Granotier C."/>
            <person name="Hanemann V."/>
            <person name="Hankeln T."/>
            <person name="Hoheisel J.D."/>
            <person name="Jaeger W."/>
            <person name="Jimenez A."/>
            <person name="Jonniaux J.-L."/>
            <person name="Kraemer C."/>
            <person name="Kuester H."/>
            <person name="Laamanen P."/>
            <person name="Legros Y."/>
            <person name="Louis E.J."/>
            <person name="Moeller-Rieker S."/>
            <person name="Monnet A."/>
            <person name="Moro M."/>
            <person name="Mueller-Auer S."/>
            <person name="Nussbaumer B."/>
            <person name="Paricio N."/>
            <person name="Paulin L."/>
            <person name="Perea J."/>
            <person name="Perez-Alonso M."/>
            <person name="Perez-Ortin J.E."/>
            <person name="Pohl T.M."/>
            <person name="Prydz H."/>
            <person name="Purnelle B."/>
            <person name="Rasmussen S.W."/>
            <person name="Remacha M.A."/>
            <person name="Revuelta J.L."/>
            <person name="Rieger M."/>
            <person name="Salom D."/>
            <person name="Saluz H.P."/>
            <person name="Saiz J.E."/>
            <person name="Saren A.-M."/>
            <person name="Schaefer M."/>
            <person name="Scharfe M."/>
            <person name="Schmidt E.R."/>
            <person name="Schneider C."/>
            <person name="Scholler P."/>
            <person name="Schwarz S."/>
            <person name="Soler-Mira A."/>
            <person name="Urrestarazu L.A."/>
            <person name="Verhasselt P."/>
            <person name="Vissers S."/>
            <person name="Voet M."/>
            <person name="Volckaert G."/>
            <person name="Wagner G."/>
            <person name="Wambutt R."/>
            <person name="Wedler E."/>
            <person name="Wedler H."/>
            <person name="Woelfl S."/>
            <person name="Harris D.E."/>
            <person name="Bowman S."/>
            <person name="Brown D."/>
            <person name="Churcher C.M."/>
            <person name="Connor R."/>
            <person name="Dedman K."/>
            <person name="Gentles S."/>
            <person name="Hamlin N."/>
            <person name="Hunt S."/>
            <person name="Jones L."/>
            <person name="McDonald S."/>
            <person name="Murphy L.D."/>
            <person name="Niblett D."/>
            <person name="Odell C."/>
            <person name="Oliver K."/>
            <person name="Rajandream M.A."/>
            <person name="Richards C."/>
            <person name="Shore L."/>
            <person name="Walsh S.V."/>
            <person name="Barrell B.G."/>
            <person name="Dietrich F.S."/>
            <person name="Mulligan J.T."/>
            <person name="Allen E."/>
            <person name="Araujo R."/>
            <person name="Aviles E."/>
            <person name="Berno A."/>
            <person name="Carpenter J."/>
            <person name="Chen E."/>
            <person name="Cherry J.M."/>
            <person name="Chung E."/>
            <person name="Duncan M."/>
            <person name="Hunicke-Smith S."/>
            <person name="Hyman R.W."/>
            <person name="Komp C."/>
            <person name="Lashkari D."/>
            <person name="Lew H."/>
            <person name="Lin D."/>
            <person name="Mosedale D."/>
            <person name="Nakahara K."/>
            <person name="Namath A."/>
            <person name="Oefner P."/>
            <person name="Oh C."/>
            <person name="Petel F.X."/>
            <person name="Roberts D."/>
            <person name="Schramm S."/>
            <person name="Schroeder M."/>
            <person name="Shogren T."/>
            <person name="Shroff N."/>
            <person name="Winant A."/>
            <person name="Yelton M.A."/>
            <person name="Botstein D."/>
            <person name="Davis R.W."/>
            <person name="Johnston M."/>
            <person name="Andrews S."/>
            <person name="Brinkman R."/>
            <person name="Cooper J."/>
            <person name="Ding H."/>
            <person name="Du Z."/>
            <person name="Favello A."/>
            <person name="Fulton L."/>
            <person name="Gattung S."/>
            <person name="Greco T."/>
            <person name="Hallsworth K."/>
            <person name="Hawkins J."/>
            <person name="Hillier L.W."/>
            <person name="Jier M."/>
            <person name="Johnson D."/>
            <person name="Johnston L."/>
            <person name="Kirsten J."/>
            <person name="Kucaba T."/>
            <person name="Langston Y."/>
            <person name="Latreille P."/>
            <person name="Le T."/>
            <person name="Mardis E."/>
            <person name="Menezes S."/>
            <person name="Miller N."/>
            <person name="Nhan M."/>
            <person name="Pauley A."/>
            <person name="Peluso D."/>
            <person name="Rifkin L."/>
            <person name="Riles L."/>
            <person name="Taich A."/>
            <person name="Trevaskis E."/>
            <person name="Vignati D."/>
            <person name="Wilcox L."/>
            <person name="Wohldman P."/>
            <person name="Vaudin M."/>
            <person name="Wilson R."/>
            <person name="Waterston R."/>
            <person name="Albermann K."/>
            <person name="Hani J."/>
            <person name="Heumann K."/>
            <person name="Kleine K."/>
            <person name="Mewes H.-W."/>
            <person name="Zollner A."/>
            <person name="Zaccaria P."/>
        </authorList>
    </citation>
    <scope>NUCLEOTIDE SEQUENCE [LARGE SCALE GENOMIC DNA]</scope>
    <source>
        <strain>ATCC 204508 / S288c</strain>
    </source>
</reference>
<reference key="2">
    <citation type="journal article" date="2014" name="G3 (Bethesda)">
        <title>The reference genome sequence of Saccharomyces cerevisiae: Then and now.</title>
        <authorList>
            <person name="Engel S.R."/>
            <person name="Dietrich F.S."/>
            <person name="Fisk D.G."/>
            <person name="Binkley G."/>
            <person name="Balakrishnan R."/>
            <person name="Costanzo M.C."/>
            <person name="Dwight S.S."/>
            <person name="Hitz B.C."/>
            <person name="Karra K."/>
            <person name="Nash R.S."/>
            <person name="Weng S."/>
            <person name="Wong E.D."/>
            <person name="Lloyd P."/>
            <person name="Skrzypek M.S."/>
            <person name="Miyasato S.R."/>
            <person name="Simison M."/>
            <person name="Cherry J.M."/>
        </authorList>
    </citation>
    <scope>GENOME REANNOTATION</scope>
    <source>
        <strain>ATCC 204508 / S288c</strain>
    </source>
</reference>
<reference key="3">
    <citation type="journal article" date="2007" name="Genome Res.">
        <title>Approaching a complete repository of sequence-verified protein-encoding clones for Saccharomyces cerevisiae.</title>
        <authorList>
            <person name="Hu Y."/>
            <person name="Rolfs A."/>
            <person name="Bhullar B."/>
            <person name="Murthy T.V.S."/>
            <person name="Zhu C."/>
            <person name="Berger M.F."/>
            <person name="Camargo A.A."/>
            <person name="Kelley F."/>
            <person name="McCarron S."/>
            <person name="Jepson D."/>
            <person name="Richardson A."/>
            <person name="Raphael J."/>
            <person name="Moreira D."/>
            <person name="Taycher E."/>
            <person name="Zuo D."/>
            <person name="Mohr S."/>
            <person name="Kane M.F."/>
            <person name="Williamson J."/>
            <person name="Simpson A.J.G."/>
            <person name="Bulyk M.L."/>
            <person name="Harlow E."/>
            <person name="Marsischky G."/>
            <person name="Kolodner R.D."/>
            <person name="LaBaer J."/>
        </authorList>
    </citation>
    <scope>NUCLEOTIDE SEQUENCE [GENOMIC DNA]</scope>
    <source>
        <strain>ATCC 204508 / S288c</strain>
    </source>
</reference>
<sequence>MTLSLNTPPGVHCQPLKHQRIPLLQLQLKSQPKSQLKSQPNKVLALKLLPPTLVPLLRLCQLPVLCWLVLPLYCCNLLNLFFNIFLEKWLSTFPSIQLPQNRFISINKIFW</sequence>
<organism>
    <name type="scientific">Saccharomyces cerevisiae (strain ATCC 204508 / S288c)</name>
    <name type="common">Baker's yeast</name>
    <dbReference type="NCBI Taxonomy" id="559292"/>
    <lineage>
        <taxon>Eukaryota</taxon>
        <taxon>Fungi</taxon>
        <taxon>Dikarya</taxon>
        <taxon>Ascomycota</taxon>
        <taxon>Saccharomycotina</taxon>
        <taxon>Saccharomycetes</taxon>
        <taxon>Saccharomycetales</taxon>
        <taxon>Saccharomycetaceae</taxon>
        <taxon>Saccharomyces</taxon>
    </lineage>
</organism>
<gene>
    <name type="ordered locus">YDR133C</name>
</gene>
<feature type="chain" id="PRO_0000299874" description="Putative uncharacterized protein YDR133C">
    <location>
        <begin position="1"/>
        <end position="111"/>
    </location>
</feature>
<feature type="transmembrane region" description="Helical" evidence="1">
    <location>
        <begin position="64"/>
        <end position="86"/>
    </location>
</feature>
<name>YDR33_YEAST</name>
<accession>Q03904</accession>